<evidence type="ECO:0000255" key="1">
    <source>
        <dbReference type="HAMAP-Rule" id="MF_00071"/>
    </source>
</evidence>
<reference key="1">
    <citation type="journal article" date="2002" name="Environ. Microbiol.">
        <title>Complete genome sequence and comparative analysis of the metabolically versatile Pseudomonas putida KT2440.</title>
        <authorList>
            <person name="Nelson K.E."/>
            <person name="Weinel C."/>
            <person name="Paulsen I.T."/>
            <person name="Dodson R.J."/>
            <person name="Hilbert H."/>
            <person name="Martins dos Santos V.A.P."/>
            <person name="Fouts D.E."/>
            <person name="Gill S.R."/>
            <person name="Pop M."/>
            <person name="Holmes M."/>
            <person name="Brinkac L.M."/>
            <person name="Beanan M.J."/>
            <person name="DeBoy R.T."/>
            <person name="Daugherty S.C."/>
            <person name="Kolonay J.F."/>
            <person name="Madupu R."/>
            <person name="Nelson W.C."/>
            <person name="White O."/>
            <person name="Peterson J.D."/>
            <person name="Khouri H.M."/>
            <person name="Hance I."/>
            <person name="Chris Lee P."/>
            <person name="Holtzapple E.K."/>
            <person name="Scanlan D."/>
            <person name="Tran K."/>
            <person name="Moazzez A."/>
            <person name="Utterback T.R."/>
            <person name="Rizzo M."/>
            <person name="Lee K."/>
            <person name="Kosack D."/>
            <person name="Moestl D."/>
            <person name="Wedler H."/>
            <person name="Lauber J."/>
            <person name="Stjepandic D."/>
            <person name="Hoheisel J."/>
            <person name="Straetz M."/>
            <person name="Heim S."/>
            <person name="Kiewitz C."/>
            <person name="Eisen J.A."/>
            <person name="Timmis K.N."/>
            <person name="Duesterhoeft A."/>
            <person name="Tuemmler B."/>
            <person name="Fraser C.M."/>
        </authorList>
    </citation>
    <scope>NUCLEOTIDE SEQUENCE [LARGE SCALE GENOMIC DNA]</scope>
    <source>
        <strain>ATCC 47054 / DSM 6125 / CFBP 8728 / NCIMB 11950 / KT2440</strain>
    </source>
</reference>
<protein>
    <recommendedName>
        <fullName evidence="1">Elongation factor 4</fullName>
        <shortName evidence="1">EF-4</shortName>
        <ecNumber evidence="1">3.6.5.n1</ecNumber>
    </recommendedName>
    <alternativeName>
        <fullName evidence="1">Ribosomal back-translocase LepA</fullName>
    </alternativeName>
</protein>
<gene>
    <name evidence="1" type="primary">lepA</name>
    <name type="ordered locus">PP_1431</name>
</gene>
<proteinExistence type="inferred from homology"/>
<feature type="chain" id="PRO_0000176325" description="Elongation factor 4">
    <location>
        <begin position="1"/>
        <end position="599"/>
    </location>
</feature>
<feature type="domain" description="tr-type G">
    <location>
        <begin position="5"/>
        <end position="187"/>
    </location>
</feature>
<feature type="binding site" evidence="1">
    <location>
        <begin position="17"/>
        <end position="22"/>
    </location>
    <ligand>
        <name>GTP</name>
        <dbReference type="ChEBI" id="CHEBI:37565"/>
    </ligand>
</feature>
<feature type="binding site" evidence="1">
    <location>
        <begin position="134"/>
        <end position="137"/>
    </location>
    <ligand>
        <name>GTP</name>
        <dbReference type="ChEBI" id="CHEBI:37565"/>
    </ligand>
</feature>
<accession>Q88MY7</accession>
<comment type="function">
    <text evidence="1">Required for accurate and efficient protein synthesis under certain stress conditions. May act as a fidelity factor of the translation reaction, by catalyzing a one-codon backward translocation of tRNAs on improperly translocated ribosomes. Back-translocation proceeds from a post-translocation (POST) complex to a pre-translocation (PRE) complex, thus giving elongation factor G a second chance to translocate the tRNAs correctly. Binds to ribosomes in a GTP-dependent manner.</text>
</comment>
<comment type="catalytic activity">
    <reaction evidence="1">
        <text>GTP + H2O = GDP + phosphate + H(+)</text>
        <dbReference type="Rhea" id="RHEA:19669"/>
        <dbReference type="ChEBI" id="CHEBI:15377"/>
        <dbReference type="ChEBI" id="CHEBI:15378"/>
        <dbReference type="ChEBI" id="CHEBI:37565"/>
        <dbReference type="ChEBI" id="CHEBI:43474"/>
        <dbReference type="ChEBI" id="CHEBI:58189"/>
        <dbReference type="EC" id="3.6.5.n1"/>
    </reaction>
</comment>
<comment type="subcellular location">
    <subcellularLocation>
        <location evidence="1">Cell inner membrane</location>
        <topology evidence="1">Peripheral membrane protein</topology>
        <orientation evidence="1">Cytoplasmic side</orientation>
    </subcellularLocation>
</comment>
<comment type="similarity">
    <text evidence="1">Belongs to the TRAFAC class translation factor GTPase superfamily. Classic translation factor GTPase family. LepA subfamily.</text>
</comment>
<name>LEPA_PSEPK</name>
<sequence>MSDLSHIRNFSIIAHIDHGKSTLADRFIQMCGGLSAREMEAQVLDSMDLERERGITIKAHSVTLHYKAQDGKTYQLNFIDTPGHVDFTYEVSRSLAACEGALLVVDAGQGVEAQSVANCYTAIEQGLEVMPVLNKMDLPQADPDRVKDEIEKIIGIDATDAVACSAKSGMGVDEVLERLVHTIPAPEGEIDAPLQALIIDSWFDNYLGVVSLVRVRQGRVKKGDKILVKSTGKVHLVDSVGVFTPKHTQTADLKAGEVGFIIASIKDIHGAPVGDTLTLSSTPEVEVLPGFKKIQPQVYAGLFPVSSDDFEDFRDALQKLTLNDSSLQYMPESSDALGFGFRCGFLGMLHMEIIQERLEREYDLDLITTAPSVIYELELKTGETIVVDNPSKLPDVSAVADFREPIVTATILVPQEHLGNVITLCIEKRGVQRDMQFLGSQVQVRYDMPMNEVVLDFFDRLKSTSRGYASLDYHFDRYQSANLVKLDVLINGDKVDALALIVHRDNAAYKGRALTEKMKELIPRQMFDVAIQAAIGGQIIARTTVKALRKNVLAKCYGGDVSRKKKLLEKQKAGKKRMKQVGNVEIPQEAFLAVLRLDS</sequence>
<dbReference type="EC" id="3.6.5.n1" evidence="1"/>
<dbReference type="EMBL" id="AE015451">
    <property type="protein sequence ID" value="AAN67053.1"/>
    <property type="molecule type" value="Genomic_DNA"/>
</dbReference>
<dbReference type="RefSeq" id="NP_743589.1">
    <property type="nucleotide sequence ID" value="NC_002947.4"/>
</dbReference>
<dbReference type="RefSeq" id="WP_010952535.1">
    <property type="nucleotide sequence ID" value="NZ_CP169744.1"/>
</dbReference>
<dbReference type="SMR" id="Q88MY7"/>
<dbReference type="STRING" id="160488.PP_1431"/>
<dbReference type="PaxDb" id="160488-PP_1431"/>
<dbReference type="GeneID" id="83682034"/>
<dbReference type="KEGG" id="ppu:PP_1431"/>
<dbReference type="PATRIC" id="fig|160488.4.peg.1519"/>
<dbReference type="eggNOG" id="COG0481">
    <property type="taxonomic scope" value="Bacteria"/>
</dbReference>
<dbReference type="HOGENOM" id="CLU_009995_3_3_6"/>
<dbReference type="OrthoDB" id="9801472at2"/>
<dbReference type="PhylomeDB" id="Q88MY7"/>
<dbReference type="BioCyc" id="PPUT160488:G1G01-1523-MONOMER"/>
<dbReference type="Proteomes" id="UP000000556">
    <property type="component" value="Chromosome"/>
</dbReference>
<dbReference type="GO" id="GO:0005886">
    <property type="term" value="C:plasma membrane"/>
    <property type="evidence" value="ECO:0007669"/>
    <property type="project" value="UniProtKB-SubCell"/>
</dbReference>
<dbReference type="GO" id="GO:0005525">
    <property type="term" value="F:GTP binding"/>
    <property type="evidence" value="ECO:0007669"/>
    <property type="project" value="UniProtKB-UniRule"/>
</dbReference>
<dbReference type="GO" id="GO:0003924">
    <property type="term" value="F:GTPase activity"/>
    <property type="evidence" value="ECO:0007669"/>
    <property type="project" value="UniProtKB-UniRule"/>
</dbReference>
<dbReference type="GO" id="GO:0097216">
    <property type="term" value="F:guanosine tetraphosphate binding"/>
    <property type="evidence" value="ECO:0007669"/>
    <property type="project" value="UniProtKB-ARBA"/>
</dbReference>
<dbReference type="GO" id="GO:0043022">
    <property type="term" value="F:ribosome binding"/>
    <property type="evidence" value="ECO:0007669"/>
    <property type="project" value="UniProtKB-UniRule"/>
</dbReference>
<dbReference type="GO" id="GO:0003746">
    <property type="term" value="F:translation elongation factor activity"/>
    <property type="evidence" value="ECO:0007669"/>
    <property type="project" value="UniProtKB-UniRule"/>
</dbReference>
<dbReference type="GO" id="GO:0045727">
    <property type="term" value="P:positive regulation of translation"/>
    <property type="evidence" value="ECO:0007669"/>
    <property type="project" value="UniProtKB-UniRule"/>
</dbReference>
<dbReference type="CDD" id="cd03699">
    <property type="entry name" value="EF4_II"/>
    <property type="match status" value="1"/>
</dbReference>
<dbReference type="CDD" id="cd16260">
    <property type="entry name" value="EF4_III"/>
    <property type="match status" value="1"/>
</dbReference>
<dbReference type="CDD" id="cd01890">
    <property type="entry name" value="LepA"/>
    <property type="match status" value="1"/>
</dbReference>
<dbReference type="CDD" id="cd03709">
    <property type="entry name" value="lepA_C"/>
    <property type="match status" value="1"/>
</dbReference>
<dbReference type="FunFam" id="3.40.50.300:FF:000078">
    <property type="entry name" value="Elongation factor 4"/>
    <property type="match status" value="1"/>
</dbReference>
<dbReference type="FunFam" id="2.40.30.10:FF:000015">
    <property type="entry name" value="Translation factor GUF1, mitochondrial"/>
    <property type="match status" value="1"/>
</dbReference>
<dbReference type="FunFam" id="3.30.70.240:FF:000007">
    <property type="entry name" value="Translation factor GUF1, mitochondrial"/>
    <property type="match status" value="1"/>
</dbReference>
<dbReference type="FunFam" id="3.30.70.2570:FF:000001">
    <property type="entry name" value="Translation factor GUF1, mitochondrial"/>
    <property type="match status" value="1"/>
</dbReference>
<dbReference type="FunFam" id="3.30.70.870:FF:000004">
    <property type="entry name" value="Translation factor GUF1, mitochondrial"/>
    <property type="match status" value="1"/>
</dbReference>
<dbReference type="Gene3D" id="3.30.70.240">
    <property type="match status" value="1"/>
</dbReference>
<dbReference type="Gene3D" id="3.30.70.2570">
    <property type="entry name" value="Elongation factor 4, C-terminal domain"/>
    <property type="match status" value="1"/>
</dbReference>
<dbReference type="Gene3D" id="3.30.70.870">
    <property type="entry name" value="Elongation Factor G (Translational Gtpase), domain 3"/>
    <property type="match status" value="1"/>
</dbReference>
<dbReference type="Gene3D" id="3.40.50.300">
    <property type="entry name" value="P-loop containing nucleotide triphosphate hydrolases"/>
    <property type="match status" value="1"/>
</dbReference>
<dbReference type="Gene3D" id="2.40.30.10">
    <property type="entry name" value="Translation factors"/>
    <property type="match status" value="1"/>
</dbReference>
<dbReference type="HAMAP" id="MF_00071">
    <property type="entry name" value="LepA"/>
    <property type="match status" value="1"/>
</dbReference>
<dbReference type="InterPro" id="IPR006297">
    <property type="entry name" value="EF-4"/>
</dbReference>
<dbReference type="InterPro" id="IPR035647">
    <property type="entry name" value="EFG_III/V"/>
</dbReference>
<dbReference type="InterPro" id="IPR000640">
    <property type="entry name" value="EFG_V-like"/>
</dbReference>
<dbReference type="InterPro" id="IPR004161">
    <property type="entry name" value="EFTu-like_2"/>
</dbReference>
<dbReference type="InterPro" id="IPR038363">
    <property type="entry name" value="LepA_C_sf"/>
</dbReference>
<dbReference type="InterPro" id="IPR013842">
    <property type="entry name" value="LepA_CTD"/>
</dbReference>
<dbReference type="InterPro" id="IPR035654">
    <property type="entry name" value="LepA_IV"/>
</dbReference>
<dbReference type="InterPro" id="IPR027417">
    <property type="entry name" value="P-loop_NTPase"/>
</dbReference>
<dbReference type="InterPro" id="IPR005225">
    <property type="entry name" value="Small_GTP-bd"/>
</dbReference>
<dbReference type="InterPro" id="IPR000795">
    <property type="entry name" value="T_Tr_GTP-bd_dom"/>
</dbReference>
<dbReference type="NCBIfam" id="TIGR01393">
    <property type="entry name" value="lepA"/>
    <property type="match status" value="1"/>
</dbReference>
<dbReference type="NCBIfam" id="TIGR00231">
    <property type="entry name" value="small_GTP"/>
    <property type="match status" value="1"/>
</dbReference>
<dbReference type="PANTHER" id="PTHR43512:SF4">
    <property type="entry name" value="TRANSLATION FACTOR GUF1 HOMOLOG, CHLOROPLASTIC"/>
    <property type="match status" value="1"/>
</dbReference>
<dbReference type="PANTHER" id="PTHR43512">
    <property type="entry name" value="TRANSLATION FACTOR GUF1-RELATED"/>
    <property type="match status" value="1"/>
</dbReference>
<dbReference type="Pfam" id="PF00679">
    <property type="entry name" value="EFG_C"/>
    <property type="match status" value="1"/>
</dbReference>
<dbReference type="Pfam" id="PF00009">
    <property type="entry name" value="GTP_EFTU"/>
    <property type="match status" value="1"/>
</dbReference>
<dbReference type="Pfam" id="PF03144">
    <property type="entry name" value="GTP_EFTU_D2"/>
    <property type="match status" value="1"/>
</dbReference>
<dbReference type="Pfam" id="PF06421">
    <property type="entry name" value="LepA_C"/>
    <property type="match status" value="1"/>
</dbReference>
<dbReference type="PRINTS" id="PR00315">
    <property type="entry name" value="ELONGATNFCT"/>
</dbReference>
<dbReference type="SUPFAM" id="SSF54980">
    <property type="entry name" value="EF-G C-terminal domain-like"/>
    <property type="match status" value="2"/>
</dbReference>
<dbReference type="SUPFAM" id="SSF52540">
    <property type="entry name" value="P-loop containing nucleoside triphosphate hydrolases"/>
    <property type="match status" value="1"/>
</dbReference>
<dbReference type="PROSITE" id="PS51722">
    <property type="entry name" value="G_TR_2"/>
    <property type="match status" value="1"/>
</dbReference>
<keyword id="KW-0997">Cell inner membrane</keyword>
<keyword id="KW-1003">Cell membrane</keyword>
<keyword id="KW-0342">GTP-binding</keyword>
<keyword id="KW-0378">Hydrolase</keyword>
<keyword id="KW-0472">Membrane</keyword>
<keyword id="KW-0547">Nucleotide-binding</keyword>
<keyword id="KW-0648">Protein biosynthesis</keyword>
<keyword id="KW-1185">Reference proteome</keyword>
<organism>
    <name type="scientific">Pseudomonas putida (strain ATCC 47054 / DSM 6125 / CFBP 8728 / NCIMB 11950 / KT2440)</name>
    <dbReference type="NCBI Taxonomy" id="160488"/>
    <lineage>
        <taxon>Bacteria</taxon>
        <taxon>Pseudomonadati</taxon>
        <taxon>Pseudomonadota</taxon>
        <taxon>Gammaproteobacteria</taxon>
        <taxon>Pseudomonadales</taxon>
        <taxon>Pseudomonadaceae</taxon>
        <taxon>Pseudomonas</taxon>
    </lineage>
</organism>